<protein>
    <recommendedName>
        <fullName>Vesicular-fusion protein SEC18</fullName>
    </recommendedName>
</protein>
<accession>P18759</accession>
<accession>D6VQ79</accession>
<accession>Q07067</accession>
<name>SEC18_YEAST</name>
<keyword id="KW-0002">3D-structure</keyword>
<keyword id="KW-0067">ATP-binding</keyword>
<keyword id="KW-0963">Cytoplasm</keyword>
<keyword id="KW-0931">ER-Golgi transport</keyword>
<keyword id="KW-0547">Nucleotide-binding</keyword>
<keyword id="KW-0597">Phosphoprotein</keyword>
<keyword id="KW-0653">Protein transport</keyword>
<keyword id="KW-1185">Reference proteome</keyword>
<keyword id="KW-0677">Repeat</keyword>
<keyword id="KW-0813">Transport</keyword>
<gene>
    <name type="primary">SEC18</name>
    <name type="ordered locus">YBR080C</name>
    <name type="ORF">YBR0736</name>
</gene>
<reference key="1">
    <citation type="journal article" date="1988" name="Mol. Cell. Biol.">
        <title>Characterization of a component of the yeast secretion machinery: identification of the SEC18 gene product.</title>
        <authorList>
            <person name="Eakle K.A."/>
            <person name="Bernstein M."/>
            <person name="Emr S.D."/>
        </authorList>
    </citation>
    <scope>NUCLEOTIDE SEQUENCE [GENOMIC DNA]</scope>
</reference>
<reference key="2">
    <citation type="journal article" date="1994" name="Yeast">
        <title>Sequence analysis of a 31 kb DNA fragment from the right arm of Saccharomyces cerevisiae chromosome II.</title>
        <authorList>
            <person name="van der Aart Q.J.M."/>
            <person name="Barthe C."/>
            <person name="Doignon F."/>
            <person name="Aigle M."/>
            <person name="Crouzet M."/>
            <person name="Steensma H.Y."/>
        </authorList>
    </citation>
    <scope>NUCLEOTIDE SEQUENCE [GENOMIC DNA]</scope>
    <source>
        <strain>ATCC 204508 / S288c</strain>
    </source>
</reference>
<reference key="3">
    <citation type="journal article" date="1994" name="EMBO J.">
        <title>Complete DNA sequence of yeast chromosome II.</title>
        <authorList>
            <person name="Feldmann H."/>
            <person name="Aigle M."/>
            <person name="Aljinovic G."/>
            <person name="Andre B."/>
            <person name="Baclet M.C."/>
            <person name="Barthe C."/>
            <person name="Baur A."/>
            <person name="Becam A.-M."/>
            <person name="Biteau N."/>
            <person name="Boles E."/>
            <person name="Brandt T."/>
            <person name="Brendel M."/>
            <person name="Brueckner M."/>
            <person name="Bussereau F."/>
            <person name="Christiansen C."/>
            <person name="Contreras R."/>
            <person name="Crouzet M."/>
            <person name="Cziepluch C."/>
            <person name="Demolis N."/>
            <person name="Delaveau T."/>
            <person name="Doignon F."/>
            <person name="Domdey H."/>
            <person name="Duesterhus S."/>
            <person name="Dubois E."/>
            <person name="Dujon B."/>
            <person name="El Bakkoury M."/>
            <person name="Entian K.-D."/>
            <person name="Feuermann M."/>
            <person name="Fiers W."/>
            <person name="Fobo G.M."/>
            <person name="Fritz C."/>
            <person name="Gassenhuber J."/>
            <person name="Glansdorff N."/>
            <person name="Goffeau A."/>
            <person name="Grivell L.A."/>
            <person name="de Haan M."/>
            <person name="Hein C."/>
            <person name="Herbert C.J."/>
            <person name="Hollenberg C.P."/>
            <person name="Holmstroem K."/>
            <person name="Jacq C."/>
            <person name="Jacquet M."/>
            <person name="Jauniaux J.-C."/>
            <person name="Jonniaux J.-L."/>
            <person name="Kallesoee T."/>
            <person name="Kiesau P."/>
            <person name="Kirchrath L."/>
            <person name="Koetter P."/>
            <person name="Korol S."/>
            <person name="Liebl S."/>
            <person name="Logghe M."/>
            <person name="Lohan A.J.E."/>
            <person name="Louis E.J."/>
            <person name="Li Z.Y."/>
            <person name="Maat M.J."/>
            <person name="Mallet L."/>
            <person name="Mannhaupt G."/>
            <person name="Messenguy F."/>
            <person name="Miosga T."/>
            <person name="Molemans F."/>
            <person name="Mueller S."/>
            <person name="Nasr F."/>
            <person name="Obermaier B."/>
            <person name="Perea J."/>
            <person name="Pierard A."/>
            <person name="Piravandi E."/>
            <person name="Pohl F.M."/>
            <person name="Pohl T.M."/>
            <person name="Potier S."/>
            <person name="Proft M."/>
            <person name="Purnelle B."/>
            <person name="Ramezani Rad M."/>
            <person name="Rieger M."/>
            <person name="Rose M."/>
            <person name="Schaaff-Gerstenschlaeger I."/>
            <person name="Scherens B."/>
            <person name="Schwarzlose C."/>
            <person name="Skala J."/>
            <person name="Slonimski P.P."/>
            <person name="Smits P.H.M."/>
            <person name="Souciet J.-L."/>
            <person name="Steensma H.Y."/>
            <person name="Stucka R."/>
            <person name="Urrestarazu L.A."/>
            <person name="van der Aart Q.J.M."/>
            <person name="Van Dyck L."/>
            <person name="Vassarotti A."/>
            <person name="Vetter I."/>
            <person name="Vierendeels F."/>
            <person name="Vissers S."/>
            <person name="Wagner G."/>
            <person name="de Wergifosse P."/>
            <person name="Wolfe K.H."/>
            <person name="Zagulski M."/>
            <person name="Zimmermann F.K."/>
            <person name="Mewes H.-W."/>
            <person name="Kleine K."/>
        </authorList>
    </citation>
    <scope>NUCLEOTIDE SEQUENCE [LARGE SCALE GENOMIC DNA]</scope>
    <source>
        <strain>ATCC 204508 / S288c</strain>
    </source>
</reference>
<reference key="4">
    <citation type="journal article" date="2014" name="G3 (Bethesda)">
        <title>The reference genome sequence of Saccharomyces cerevisiae: Then and now.</title>
        <authorList>
            <person name="Engel S.R."/>
            <person name="Dietrich F.S."/>
            <person name="Fisk D.G."/>
            <person name="Binkley G."/>
            <person name="Balakrishnan R."/>
            <person name="Costanzo M.C."/>
            <person name="Dwight S.S."/>
            <person name="Hitz B.C."/>
            <person name="Karra K."/>
            <person name="Nash R.S."/>
            <person name="Weng S."/>
            <person name="Wong E.D."/>
            <person name="Lloyd P."/>
            <person name="Skrzypek M.S."/>
            <person name="Miyasato S.R."/>
            <person name="Simison M."/>
            <person name="Cherry J.M."/>
        </authorList>
    </citation>
    <scope>GENOME REANNOTATION</scope>
    <source>
        <strain>ATCC 204508 / S288c</strain>
    </source>
</reference>
<reference key="5">
    <citation type="submission" date="1997-11" db="EMBL/GenBank/DDBJ databases">
        <authorList>
            <person name="Vornlocher H.-P."/>
            <person name="Hanachi P."/>
            <person name="Hershey J.W.B."/>
        </authorList>
    </citation>
    <scope>NUCLEOTIDE SEQUENCE [GENOMIC DNA] OF 566-758</scope>
    <source>
        <strain>ATCC 200060 / W303</strain>
    </source>
</reference>
<reference key="6">
    <citation type="journal article" date="2003" name="Nature">
        <title>Global analysis of protein expression in yeast.</title>
        <authorList>
            <person name="Ghaemmaghami S."/>
            <person name="Huh W.-K."/>
            <person name="Bower K."/>
            <person name="Howson R.W."/>
            <person name="Belle A."/>
            <person name="Dephoure N."/>
            <person name="O'Shea E.K."/>
            <person name="Weissman J.S."/>
        </authorList>
    </citation>
    <scope>LEVEL OF PROTEIN EXPRESSION [LARGE SCALE ANALYSIS]</scope>
</reference>
<reference key="7">
    <citation type="journal article" date="2007" name="Proc. Natl. Acad. Sci. U.S.A.">
        <title>Analysis of phosphorylation sites on proteins from Saccharomyces cerevisiae by electron transfer dissociation (ETD) mass spectrometry.</title>
        <authorList>
            <person name="Chi A."/>
            <person name="Huttenhower C."/>
            <person name="Geer L.Y."/>
            <person name="Coon J.J."/>
            <person name="Syka J.E.P."/>
            <person name="Bai D.L."/>
            <person name="Shabanowitz J."/>
            <person name="Burke D.J."/>
            <person name="Troyanskaya O.G."/>
            <person name="Hunt D.F."/>
        </authorList>
    </citation>
    <scope>PHOSPHORYLATION [LARGE SCALE ANALYSIS] AT SER-226</scope>
    <scope>IDENTIFICATION BY MASS SPECTROMETRY [LARGE SCALE ANALYSIS]</scope>
</reference>
<reference key="8">
    <citation type="journal article" date="2008" name="Mol. Cell. Proteomics">
        <title>A multidimensional chromatography technology for in-depth phosphoproteome analysis.</title>
        <authorList>
            <person name="Albuquerque C.P."/>
            <person name="Smolka M.B."/>
            <person name="Payne S.H."/>
            <person name="Bafna V."/>
            <person name="Eng J."/>
            <person name="Zhou H."/>
        </authorList>
    </citation>
    <scope>PHOSPHORYLATION [LARGE SCALE ANALYSIS] AT SER-226</scope>
    <scope>IDENTIFICATION BY MASS SPECTROMETRY [LARGE SCALE ANALYSIS]</scope>
</reference>
<reference key="9">
    <citation type="journal article" date="1999" name="Proc. Natl. Acad. Sci. U.S.A.">
        <title>Crystal structure of the Sec18p N-terminal domain.</title>
        <authorList>
            <person name="Babor S.M."/>
            <person name="Fass D."/>
        </authorList>
    </citation>
    <scope>X-RAY CRYSTALLOGRAPHY (2.3 ANGSTROMS) OF 22-210</scope>
</reference>
<comment type="function">
    <text>Required for vesicle-mediated transport. Catalyzes the fusion of transport vesicles within the Golgi cisternae. Is also required for transport from the endoplasmic reticulum to the Golgi stack. Seems to function as a fusion protein required for the delivery of cargo proteins to all compartments of the Golgi stack independent of vesicle origin.</text>
</comment>
<comment type="subunit">
    <text>Homohexamer. Binds to SEC17.</text>
</comment>
<comment type="subcellular location">
    <subcellularLocation>
        <location>Cytoplasm</location>
    </subcellularLocation>
</comment>
<comment type="miscellaneous">
    <text evidence="2">Present with 5920 molecules/cell in log phase SD medium.</text>
</comment>
<comment type="similarity">
    <text evidence="3">Belongs to the AAA ATPase family.</text>
</comment>
<comment type="sequence caution" evidence="3">
    <conflict type="erroneous initiation">
        <sequence resource="EMBL-CDS" id="AAA35031"/>
    </conflict>
</comment>
<feature type="chain" id="PRO_0000084571" description="Vesicular-fusion protein SEC18">
    <location>
        <begin position="1"/>
        <end position="758"/>
    </location>
</feature>
<feature type="binding site" evidence="1">
    <location>
        <begin position="281"/>
        <end position="288"/>
    </location>
    <ligand>
        <name>ATP</name>
        <dbReference type="ChEBI" id="CHEBI:30616"/>
    </ligand>
</feature>
<feature type="binding site" evidence="1">
    <location>
        <begin position="564"/>
        <end position="571"/>
    </location>
    <ligand>
        <name>ATP</name>
        <dbReference type="ChEBI" id="CHEBI:30616"/>
    </ligand>
</feature>
<feature type="modified residue" description="Phosphoserine" evidence="4 5">
    <location>
        <position position="226"/>
    </location>
</feature>
<feature type="sequence conflict" description="In Ref. 1; AAA35030/AAA35031." evidence="3" ref="1">
    <location>
        <position position="381"/>
    </location>
</feature>
<feature type="strand" evidence="6">
    <location>
        <begin position="27"/>
        <end position="33"/>
    </location>
</feature>
<feature type="helix" evidence="6">
    <location>
        <begin position="37"/>
        <end position="40"/>
    </location>
</feature>
<feature type="turn" evidence="6">
    <location>
        <begin position="41"/>
        <end position="43"/>
    </location>
</feature>
<feature type="strand" evidence="6">
    <location>
        <begin position="44"/>
        <end position="47"/>
    </location>
</feature>
<feature type="turn" evidence="6">
    <location>
        <begin position="49"/>
        <end position="51"/>
    </location>
</feature>
<feature type="strand" evidence="6">
    <location>
        <begin position="57"/>
        <end position="60"/>
    </location>
</feature>
<feature type="turn" evidence="6">
    <location>
        <begin position="61"/>
        <end position="63"/>
    </location>
</feature>
<feature type="strand" evidence="6">
    <location>
        <begin position="64"/>
        <end position="70"/>
    </location>
</feature>
<feature type="strand" evidence="6">
    <location>
        <begin position="78"/>
        <end position="81"/>
    </location>
</feature>
<feature type="helix" evidence="6">
    <location>
        <begin position="83"/>
        <end position="89"/>
    </location>
</feature>
<feature type="strand" evidence="6">
    <location>
        <begin position="96"/>
        <end position="101"/>
    </location>
</feature>
<feature type="helix" evidence="6">
    <location>
        <begin position="104"/>
        <end position="108"/>
    </location>
</feature>
<feature type="strand" evidence="6">
    <location>
        <begin position="113"/>
        <end position="123"/>
    </location>
</feature>
<feature type="helix" evidence="6">
    <location>
        <begin position="136"/>
        <end position="147"/>
    </location>
</feature>
<feature type="strand" evidence="6">
    <location>
        <begin position="157"/>
        <end position="162"/>
    </location>
</feature>
<feature type="strand" evidence="6">
    <location>
        <begin position="165"/>
        <end position="177"/>
    </location>
</feature>
<feature type="strand" evidence="6">
    <location>
        <begin position="181"/>
        <end position="183"/>
    </location>
</feature>
<feature type="strand" evidence="6">
    <location>
        <begin position="203"/>
        <end position="208"/>
    </location>
</feature>
<proteinExistence type="evidence at protein level"/>
<dbReference type="EMBL" id="M20662">
    <property type="protein sequence ID" value="AAA35030.1"/>
    <property type="molecule type" value="Genomic_DNA"/>
</dbReference>
<dbReference type="EMBL" id="M20662">
    <property type="protein sequence ID" value="AAA35031.1"/>
    <property type="status" value="ALT_INIT"/>
    <property type="molecule type" value="Genomic_DNA"/>
</dbReference>
<dbReference type="EMBL" id="X76294">
    <property type="protein sequence ID" value="CAA53939.1"/>
    <property type="molecule type" value="Genomic_DNA"/>
</dbReference>
<dbReference type="EMBL" id="Z35949">
    <property type="protein sequence ID" value="CAA85025.1"/>
    <property type="molecule type" value="Genomic_DNA"/>
</dbReference>
<dbReference type="EMBL" id="AF004912">
    <property type="protein sequence ID" value="AAB82417.1"/>
    <property type="molecule type" value="Genomic_DNA"/>
</dbReference>
<dbReference type="EMBL" id="BK006936">
    <property type="protein sequence ID" value="DAA07199.1"/>
    <property type="molecule type" value="Genomic_DNA"/>
</dbReference>
<dbReference type="PIR" id="S45477">
    <property type="entry name" value="S45477"/>
</dbReference>
<dbReference type="RefSeq" id="NP_009636.3">
    <property type="nucleotide sequence ID" value="NM_001178428.3"/>
</dbReference>
<dbReference type="PDB" id="1CR5">
    <property type="method" value="X-ray"/>
    <property type="resolution" value="2.30 A"/>
    <property type="chains" value="A/B/C=22-210"/>
</dbReference>
<dbReference type="PDBsum" id="1CR5"/>
<dbReference type="SMR" id="P18759"/>
<dbReference type="BioGRID" id="32782">
    <property type="interactions" value="385"/>
</dbReference>
<dbReference type="DIP" id="DIP-2497N"/>
<dbReference type="FunCoup" id="P18759">
    <property type="interactions" value="1020"/>
</dbReference>
<dbReference type="IntAct" id="P18759">
    <property type="interactions" value="30"/>
</dbReference>
<dbReference type="MINT" id="P18759"/>
<dbReference type="STRING" id="4932.YBR080C"/>
<dbReference type="TCDB" id="1.F.1.1.2">
    <property type="family name" value="the synaptosomal vesicle fusion pore (svf-pore) family"/>
</dbReference>
<dbReference type="iPTMnet" id="P18759"/>
<dbReference type="PaxDb" id="4932-YBR080C"/>
<dbReference type="PeptideAtlas" id="P18759"/>
<dbReference type="EnsemblFungi" id="YBR080C_mRNA">
    <property type="protein sequence ID" value="YBR080C"/>
    <property type="gene ID" value="YBR080C"/>
</dbReference>
<dbReference type="GeneID" id="852372"/>
<dbReference type="KEGG" id="sce:YBR080C"/>
<dbReference type="AGR" id="SGD:S000000284"/>
<dbReference type="SGD" id="S000000284">
    <property type="gene designation" value="SEC18"/>
</dbReference>
<dbReference type="VEuPathDB" id="FungiDB:YBR080C"/>
<dbReference type="eggNOG" id="KOG0741">
    <property type="taxonomic scope" value="Eukaryota"/>
</dbReference>
<dbReference type="GeneTree" id="ENSGT00530000064085"/>
<dbReference type="HOGENOM" id="CLU_008037_2_0_1"/>
<dbReference type="InParanoid" id="P18759"/>
<dbReference type="OMA" id="CFDNEIA"/>
<dbReference type="OrthoDB" id="9982946at2759"/>
<dbReference type="BioCyc" id="YEAST:G3O-29048-MONOMER"/>
<dbReference type="Reactome" id="R-SCE-204005">
    <property type="pathway name" value="COPII-mediated vesicle transport"/>
</dbReference>
<dbReference type="Reactome" id="R-SCE-6807878">
    <property type="pathway name" value="COPI-mediated anterograde transport"/>
</dbReference>
<dbReference type="Reactome" id="R-SCE-6811434">
    <property type="pathway name" value="COPI-dependent Golgi-to-ER retrograde traffic"/>
</dbReference>
<dbReference type="Reactome" id="R-SCE-6811438">
    <property type="pathway name" value="Intra-Golgi traffic"/>
</dbReference>
<dbReference type="Reactome" id="R-SCE-6811440">
    <property type="pathway name" value="Retrograde transport at the Trans-Golgi-Network"/>
</dbReference>
<dbReference type="BioGRID-ORCS" id="852372">
    <property type="hits" value="6 hits in 10 CRISPR screens"/>
</dbReference>
<dbReference type="EvolutionaryTrace" id="P18759"/>
<dbReference type="PRO" id="PR:P18759"/>
<dbReference type="Proteomes" id="UP000002311">
    <property type="component" value="Chromosome II"/>
</dbReference>
<dbReference type="RNAct" id="P18759">
    <property type="molecule type" value="protein"/>
</dbReference>
<dbReference type="GO" id="GO:0005829">
    <property type="term" value="C:cytosol"/>
    <property type="evidence" value="ECO:0007005"/>
    <property type="project" value="SGD"/>
</dbReference>
<dbReference type="GO" id="GO:0005794">
    <property type="term" value="C:Golgi apparatus"/>
    <property type="evidence" value="ECO:0000314"/>
    <property type="project" value="SGD"/>
</dbReference>
<dbReference type="GO" id="GO:0005795">
    <property type="term" value="C:Golgi stack"/>
    <property type="evidence" value="ECO:0000318"/>
    <property type="project" value="GO_Central"/>
</dbReference>
<dbReference type="GO" id="GO:0043332">
    <property type="term" value="C:mating projection tip"/>
    <property type="evidence" value="ECO:0007005"/>
    <property type="project" value="SGD"/>
</dbReference>
<dbReference type="GO" id="GO:0005524">
    <property type="term" value="F:ATP binding"/>
    <property type="evidence" value="ECO:0007669"/>
    <property type="project" value="UniProtKB-KW"/>
</dbReference>
<dbReference type="GO" id="GO:0016887">
    <property type="term" value="F:ATP hydrolysis activity"/>
    <property type="evidence" value="ECO:0000314"/>
    <property type="project" value="SGD"/>
</dbReference>
<dbReference type="GO" id="GO:0070300">
    <property type="term" value="F:phosphatidic acid binding"/>
    <property type="evidence" value="ECO:0000314"/>
    <property type="project" value="SGD"/>
</dbReference>
<dbReference type="GO" id="GO:0000149">
    <property type="term" value="F:SNARE binding"/>
    <property type="evidence" value="ECO:0000314"/>
    <property type="project" value="SGD"/>
</dbReference>
<dbReference type="GO" id="GO:0000045">
    <property type="term" value="P:autophagosome assembly"/>
    <property type="evidence" value="ECO:0000315"/>
    <property type="project" value="SGD"/>
</dbReference>
<dbReference type="GO" id="GO:0006888">
    <property type="term" value="P:endoplasmic reticulum to Golgi vesicle-mediated transport"/>
    <property type="evidence" value="ECO:0000314"/>
    <property type="project" value="SGD"/>
</dbReference>
<dbReference type="GO" id="GO:0043001">
    <property type="term" value="P:Golgi to plasma membrane protein transport"/>
    <property type="evidence" value="ECO:0000315"/>
    <property type="project" value="SGD"/>
</dbReference>
<dbReference type="GO" id="GO:0048219">
    <property type="term" value="P:inter-Golgi cisterna vesicle-mediated transport"/>
    <property type="evidence" value="ECO:0000315"/>
    <property type="project" value="SGD"/>
</dbReference>
<dbReference type="GO" id="GO:0006891">
    <property type="term" value="P:intra-Golgi vesicle-mediated transport"/>
    <property type="evidence" value="ECO:0000318"/>
    <property type="project" value="GO_Central"/>
</dbReference>
<dbReference type="GO" id="GO:0016236">
    <property type="term" value="P:macroautophagy"/>
    <property type="evidence" value="ECO:0000315"/>
    <property type="project" value="SGD"/>
</dbReference>
<dbReference type="GO" id="GO:0035494">
    <property type="term" value="P:SNARE complex disassembly"/>
    <property type="evidence" value="ECO:0000314"/>
    <property type="project" value="SGD"/>
</dbReference>
<dbReference type="GO" id="GO:0042144">
    <property type="term" value="P:vacuole fusion, non-autophagic"/>
    <property type="evidence" value="ECO:0000314"/>
    <property type="project" value="SGD"/>
</dbReference>
<dbReference type="GO" id="GO:0048280">
    <property type="term" value="P:vesicle fusion with Golgi apparatus"/>
    <property type="evidence" value="ECO:0000314"/>
    <property type="project" value="SGD"/>
</dbReference>
<dbReference type="CDD" id="cd00009">
    <property type="entry name" value="AAA"/>
    <property type="match status" value="1"/>
</dbReference>
<dbReference type="CDD" id="cd19504">
    <property type="entry name" value="RecA-like_NSF-SEC18_r1-like"/>
    <property type="match status" value="1"/>
</dbReference>
<dbReference type="FunFam" id="2.40.40.20:FF:000027">
    <property type="entry name" value="Sec18p"/>
    <property type="match status" value="1"/>
</dbReference>
<dbReference type="FunFam" id="1.10.8.60:FF:000026">
    <property type="entry name" value="vesicle-fusing ATPase isoform X1"/>
    <property type="match status" value="1"/>
</dbReference>
<dbReference type="FunFam" id="3.40.50.300:FF:000166">
    <property type="entry name" value="vesicle-fusing ATPase isoform X1"/>
    <property type="match status" value="1"/>
</dbReference>
<dbReference type="FunFam" id="3.40.50.300:FF:000187">
    <property type="entry name" value="Vesicular-fusion ATPase SEC18"/>
    <property type="match status" value="1"/>
</dbReference>
<dbReference type="FunFam" id="3.10.330.10:FF:000009">
    <property type="entry name" value="Vesicular-fusion protein sec18"/>
    <property type="match status" value="1"/>
</dbReference>
<dbReference type="Gene3D" id="1.10.8.60">
    <property type="match status" value="2"/>
</dbReference>
<dbReference type="Gene3D" id="2.40.40.20">
    <property type="match status" value="1"/>
</dbReference>
<dbReference type="Gene3D" id="3.10.330.10">
    <property type="match status" value="1"/>
</dbReference>
<dbReference type="Gene3D" id="3.40.50.300">
    <property type="entry name" value="P-loop containing nucleotide triphosphate hydrolases"/>
    <property type="match status" value="2"/>
</dbReference>
<dbReference type="InterPro" id="IPR003593">
    <property type="entry name" value="AAA+_ATPase"/>
</dbReference>
<dbReference type="InterPro" id="IPR041569">
    <property type="entry name" value="AAA_lid_3"/>
</dbReference>
<dbReference type="InterPro" id="IPR009010">
    <property type="entry name" value="Asp_de-COase-like_dom_sf"/>
</dbReference>
<dbReference type="InterPro" id="IPR003959">
    <property type="entry name" value="ATPase_AAA_core"/>
</dbReference>
<dbReference type="InterPro" id="IPR003960">
    <property type="entry name" value="ATPase_AAA_CS"/>
</dbReference>
<dbReference type="InterPro" id="IPR004201">
    <property type="entry name" value="Cdc48_dom2"/>
</dbReference>
<dbReference type="InterPro" id="IPR029067">
    <property type="entry name" value="CDC48_domain_2-like_sf"/>
</dbReference>
<dbReference type="InterPro" id="IPR003338">
    <property type="entry name" value="CDC4_N-term_subdom"/>
</dbReference>
<dbReference type="InterPro" id="IPR027417">
    <property type="entry name" value="P-loop_NTPase"/>
</dbReference>
<dbReference type="InterPro" id="IPR039812">
    <property type="entry name" value="Vesicle-fus_ATPase"/>
</dbReference>
<dbReference type="PANTHER" id="PTHR23078:SF3">
    <property type="entry name" value="VESICLE-FUSING ATPASE"/>
    <property type="match status" value="1"/>
</dbReference>
<dbReference type="PANTHER" id="PTHR23078">
    <property type="entry name" value="VESICULAR-FUSION PROTEIN NSF"/>
    <property type="match status" value="1"/>
</dbReference>
<dbReference type="Pfam" id="PF00004">
    <property type="entry name" value="AAA"/>
    <property type="match status" value="2"/>
</dbReference>
<dbReference type="Pfam" id="PF17862">
    <property type="entry name" value="AAA_lid_3"/>
    <property type="match status" value="1"/>
</dbReference>
<dbReference type="Pfam" id="PF02933">
    <property type="entry name" value="CDC48_2"/>
    <property type="match status" value="1"/>
</dbReference>
<dbReference type="SMART" id="SM00382">
    <property type="entry name" value="AAA"/>
    <property type="match status" value="2"/>
</dbReference>
<dbReference type="SMART" id="SM01072">
    <property type="entry name" value="CDC48_2"/>
    <property type="match status" value="1"/>
</dbReference>
<dbReference type="SMART" id="SM01073">
    <property type="entry name" value="CDC48_N"/>
    <property type="match status" value="1"/>
</dbReference>
<dbReference type="SUPFAM" id="SSF50692">
    <property type="entry name" value="ADC-like"/>
    <property type="match status" value="1"/>
</dbReference>
<dbReference type="SUPFAM" id="SSF54585">
    <property type="entry name" value="Cdc48 domain 2-like"/>
    <property type="match status" value="1"/>
</dbReference>
<dbReference type="SUPFAM" id="SSF52540">
    <property type="entry name" value="P-loop containing nucleoside triphosphate hydrolases"/>
    <property type="match status" value="2"/>
</dbReference>
<dbReference type="PROSITE" id="PS00674">
    <property type="entry name" value="AAA"/>
    <property type="match status" value="1"/>
</dbReference>
<organism>
    <name type="scientific">Saccharomyces cerevisiae (strain ATCC 204508 / S288c)</name>
    <name type="common">Baker's yeast</name>
    <dbReference type="NCBI Taxonomy" id="559292"/>
    <lineage>
        <taxon>Eukaryota</taxon>
        <taxon>Fungi</taxon>
        <taxon>Dikarya</taxon>
        <taxon>Ascomycota</taxon>
        <taxon>Saccharomycotina</taxon>
        <taxon>Saccharomycetes</taxon>
        <taxon>Saccharomycetales</taxon>
        <taxon>Saccharomycetaceae</taxon>
        <taxon>Saccharomyces</taxon>
    </lineage>
</organism>
<sequence>MFKIPGFGKAAANHTPPDMTNMDTRTRHLKVSNCPNNSYALANVAAVSPNDFPNNIYIIIDNLFVFTTRHSNDIPPGTIGFNGNQRTWGGWSLNQDVQAKAFDLFKYSGKQSYLGSIDIDISFRARGKAVSTVFDQDELAKQFVRCYESQIFSPTQYLIMEFQGHFFDLKIRNVQAIDLGDIEPTSAVATGIETKGILTKQTQINFFKGRDGLVNLKSSNSLRPRSNAVIRPDFKFEDLGVGGLDKEFTKIFRRAFASRIFPPSVIEKLGISHVKGLLLYGPPGTGKTLIARKIGTMLNAKEPKIVNGPEILSKYVGSSEENIRNLFKDAEAEYRAKGEESSLHIIIFDELDSVFKQRGSRGDGTGVGDNVVNQLLAKMDGVDQLNNILVIGMTNRKDLIDSALLRPGRFEVQVEIHLPDEKGRLQIFDIQTKKMRENNMMSDDVNLAELAALTKNFSGAEIEGLVKSASSFAINKTVNIGKGATKLNTKDIAKLKVTREDFLNALNDVTPAFGISEEDLKTCVEGGMMLYSERVNSILKNGARYVRQVRESDKSRLVSLLIHGPAGSGKTALAAEIALKSGFPFIRLISPNELSGMSESAKIAYIDNTFRDAYKSPLNILVIDSLETLVDWVPIGPRFSNNILQMLKVALKRKPPQDRRLLIMTTTSAYSVLQQMDILSCFDNEIAVPNMTNLDELNNVMIESNFLDDAGRVKVINELSRSCPNFNVGIKKTLTNIETARHDEDPVNELVELMTQSA</sequence>
<evidence type="ECO:0000255" key="1"/>
<evidence type="ECO:0000269" key="2">
    <source>
    </source>
</evidence>
<evidence type="ECO:0000305" key="3"/>
<evidence type="ECO:0007744" key="4">
    <source>
    </source>
</evidence>
<evidence type="ECO:0007744" key="5">
    <source>
    </source>
</evidence>
<evidence type="ECO:0007829" key="6">
    <source>
        <dbReference type="PDB" id="1CR5"/>
    </source>
</evidence>